<comment type="function">
    <text evidence="1 4 5">Component of the nuclear pore complex (PubMed:24011592). Plays a direct role in nuclear protein import (By similarity). Required for anoxia-induced prophase arrest; may function in concert with cdk-1 to arrest prophase blastomeres in response to anoxia (PubMed:20053678).</text>
</comment>
<comment type="subunit">
    <text evidence="5">Interacts with importin beta imb-1 (PubMed:24011592). Interacts with DNA-directed RNA polymerase III subunit rpc-1 (PubMed:24011592). Interacts with TATA-box-binding protein tbp-1 (PubMed:24011592). Interacts with GTF3C5 homolog tftc-5 (PubMed:24011592). Interacts with GTF3C3 homolog tftc-3 (PubMed:24011592).</text>
</comment>
<comment type="subcellular location">
    <subcellularLocation>
        <location evidence="5 8">Nucleus</location>
        <location evidence="5 8">Nuclear pore complex</location>
    </subcellularLocation>
    <subcellularLocation>
        <location evidence="8 9">Nucleus membrane</location>
        <topology evidence="8 9">Peripheral membrane protein</topology>
        <orientation evidence="8 9">Nucleoplasmic side</orientation>
    </subcellularLocation>
</comment>
<keyword id="KW-0472">Membrane</keyword>
<keyword id="KW-0509">mRNA transport</keyword>
<keyword id="KW-0906">Nuclear pore complex</keyword>
<keyword id="KW-0539">Nucleus</keyword>
<keyword id="KW-0653">Protein transport</keyword>
<keyword id="KW-1185">Reference proteome</keyword>
<keyword id="KW-0811">Translocation</keyword>
<keyword id="KW-0813">Transport</keyword>
<feature type="chain" id="PRO_0000457357" description="Nuclear pore complex protein npp-16">
    <location>
        <begin position="1"/>
        <end position="497"/>
    </location>
</feature>
<feature type="region of interest" description="Disordered" evidence="3">
    <location>
        <begin position="76"/>
        <end position="95"/>
    </location>
</feature>
<feature type="region of interest" description="Disordered" evidence="3">
    <location>
        <begin position="210"/>
        <end position="308"/>
    </location>
</feature>
<feature type="region of interest" description="Disordered" evidence="3">
    <location>
        <begin position="359"/>
        <end position="379"/>
    </location>
</feature>
<feature type="region of interest" description="RanBD1" evidence="2">
    <location>
        <begin position="390"/>
        <end position="497"/>
    </location>
</feature>
<feature type="compositionally biased region" description="Basic and acidic residues" evidence="3">
    <location>
        <begin position="231"/>
        <end position="240"/>
    </location>
</feature>
<feature type="compositionally biased region" description="Basic and acidic residues" evidence="3">
    <location>
        <begin position="250"/>
        <end position="260"/>
    </location>
</feature>
<sequence>MNSLIPPPTSEQQMNMFRLRDKMSLLNAEFLKVINGYFTEKNHYDFSGTMKSYMDHVAQLKQIYKVDDDVAADMTVPRRTENSSESSGETVAPRKIAKAVRKNGTPKNPLNSTVFAASSPAATVASVPKFGDISVITKETPAPLAKTAEPLVAPAAPATARKRAIRGGGPLGGAESVVFKSGEDGQAATSSVKIPATTIKFPEPTKDFWTKKSDAPAAPSNSGSLFAFLGKDGDKPKETPKFSGFSFGKKPAEPSEEPKAADSTPKLTFGSPKEADLPKPASSLFGASPSKPLVFGGSSADSTTSAPKPFSALSTAASLFGSSSASTTTTATQPLSFGSSSTGGSSLFSGFAGLAQKAMENQNQAKPEGSGEDDEGEYVPPKVETVENQEPDAVLSSKVSVFKFTGKEYTKLGVGMLHIKDNDGKFSVLIRAATATGTVWLNSLCNKAMKATVVDAKGDRIRLTCPSSSTEMATMMIRFGTADGAKKFTDKILEVAV</sequence>
<evidence type="ECO:0000250" key="1">
    <source>
        <dbReference type="UniProtKB" id="Q9UKX7"/>
    </source>
</evidence>
<evidence type="ECO:0000255" key="2"/>
<evidence type="ECO:0000256" key="3">
    <source>
        <dbReference type="SAM" id="MobiDB-lite"/>
    </source>
</evidence>
<evidence type="ECO:0000269" key="4">
    <source>
    </source>
</evidence>
<evidence type="ECO:0000269" key="5">
    <source>
    </source>
</evidence>
<evidence type="ECO:0000303" key="6">
    <source>
    </source>
</evidence>
<evidence type="ECO:0000305" key="7"/>
<evidence type="ECO:0000305" key="8">
    <source>
    </source>
</evidence>
<evidence type="ECO:0000305" key="9">
    <source>
    </source>
</evidence>
<evidence type="ECO:0000312" key="10">
    <source>
        <dbReference type="Proteomes" id="UP000001940"/>
    </source>
</evidence>
<evidence type="ECO:0000312" key="11">
    <source>
        <dbReference type="WormBase" id="Y56A3A.17"/>
    </source>
</evidence>
<proteinExistence type="evidence at protein level"/>
<gene>
    <name evidence="11" type="primary">npp-16</name>
    <name evidence="11" type="ORF">Y56A3A.17</name>
</gene>
<accession>Q7K6X4</accession>
<organism evidence="10">
    <name type="scientific">Caenorhabditis elegans</name>
    <dbReference type="NCBI Taxonomy" id="6239"/>
    <lineage>
        <taxon>Eukaryota</taxon>
        <taxon>Metazoa</taxon>
        <taxon>Ecdysozoa</taxon>
        <taxon>Nematoda</taxon>
        <taxon>Chromadorea</taxon>
        <taxon>Rhabditida</taxon>
        <taxon>Rhabditina</taxon>
        <taxon>Rhabditomorpha</taxon>
        <taxon>Rhabditoidea</taxon>
        <taxon>Rhabditidae</taxon>
        <taxon>Peloderinae</taxon>
        <taxon>Caenorhabditis</taxon>
    </lineage>
</organism>
<protein>
    <recommendedName>
        <fullName evidence="1">Nuclear pore complex protein npp-16</fullName>
    </recommendedName>
    <alternativeName>
        <fullName evidence="6">Nucleoporin npp-16</fullName>
    </alternativeName>
</protein>
<reference evidence="10" key="1">
    <citation type="journal article" date="1998" name="Science">
        <title>Genome sequence of the nematode C. elegans: a platform for investigating biology.</title>
        <authorList>
            <consortium name="The C. elegans sequencing consortium"/>
        </authorList>
    </citation>
    <scope>NUCLEOTIDE SEQUENCE [LARGE SCALE GENOMIC DNA]</scope>
    <source>
        <strain evidence="10">Bristol N2</strain>
    </source>
</reference>
<reference evidence="7" key="2">
    <citation type="journal article" date="2010" name="Mol. Biol. Cell">
        <title>NPP-16/Nup50 function and CDK-1 inactivation are associated with anoxia-induced prophase arrest in Caenorhabditis elegans.</title>
        <authorList>
            <person name="Hajeri V.A."/>
            <person name="Little B.A."/>
            <person name="Ladage M.L."/>
            <person name="Padilla P.A."/>
        </authorList>
    </citation>
    <scope>FUNCTION</scope>
    <scope>SUBCELLULAR LOCATION</scope>
</reference>
<reference evidence="7" key="3">
    <citation type="journal article" date="2013" name="Mol. Cell">
        <title>Integral nuclear pore proteins bind to Pol III-transcribed genes and are required for Pol III transcript processing in C. elegans.</title>
        <authorList>
            <person name="Ikegami K."/>
            <person name="Lieb J.D."/>
        </authorList>
    </citation>
    <scope>FUNCTION</scope>
    <scope>SUBUNIT</scope>
    <scope>SUBCELLULAR LOCATION</scope>
</reference>
<name>NUP50_CAEEL</name>
<dbReference type="EMBL" id="BX284603">
    <property type="protein sequence ID" value="CAB60516.1"/>
    <property type="molecule type" value="Genomic_DNA"/>
</dbReference>
<dbReference type="RefSeq" id="NP_499551.1">
    <property type="nucleotide sequence ID" value="NM_067150.3"/>
</dbReference>
<dbReference type="SMR" id="Q7K6X4"/>
<dbReference type="FunCoup" id="Q7K6X4">
    <property type="interactions" value="512"/>
</dbReference>
<dbReference type="IntAct" id="Q7K6X4">
    <property type="interactions" value="1"/>
</dbReference>
<dbReference type="STRING" id="6239.Y56A3A.17.2"/>
<dbReference type="PaxDb" id="6239-Y56A3A.17a"/>
<dbReference type="PeptideAtlas" id="Q7K6X4"/>
<dbReference type="EnsemblMetazoa" id="Y56A3A.17.1">
    <property type="protein sequence ID" value="Y56A3A.17.1"/>
    <property type="gene ID" value="WBGene00003802"/>
</dbReference>
<dbReference type="GeneID" id="176623"/>
<dbReference type="KEGG" id="cel:CELE_Y56A3A.17"/>
<dbReference type="UCSC" id="Y56A3A.17a">
    <property type="organism name" value="c. elegans"/>
</dbReference>
<dbReference type="AGR" id="WB:WBGene00003802"/>
<dbReference type="CTD" id="176623"/>
<dbReference type="WormBase" id="Y56A3A.17">
    <property type="protein sequence ID" value="CE22585"/>
    <property type="gene ID" value="WBGene00003802"/>
    <property type="gene designation" value="npp-16"/>
</dbReference>
<dbReference type="GeneTree" id="ENSGT00440000035348"/>
<dbReference type="HOGENOM" id="CLU_548880_0_0_1"/>
<dbReference type="InParanoid" id="Q7K6X4"/>
<dbReference type="OrthoDB" id="10062131at2759"/>
<dbReference type="PRO" id="PR:Q7K6X4"/>
<dbReference type="Proteomes" id="UP000001940">
    <property type="component" value="Chromosome III"/>
</dbReference>
<dbReference type="Bgee" id="WBGene00003802">
    <property type="expression patterns" value="Expressed in adult organism and 4 other cell types or tissues"/>
</dbReference>
<dbReference type="GO" id="GO:0031965">
    <property type="term" value="C:nuclear membrane"/>
    <property type="evidence" value="ECO:0007669"/>
    <property type="project" value="UniProtKB-SubCell"/>
</dbReference>
<dbReference type="GO" id="GO:0005643">
    <property type="term" value="C:nuclear pore"/>
    <property type="evidence" value="ECO:0000314"/>
    <property type="project" value="UniProtKB"/>
</dbReference>
<dbReference type="GO" id="GO:0051028">
    <property type="term" value="P:mRNA transport"/>
    <property type="evidence" value="ECO:0007669"/>
    <property type="project" value="UniProtKB-KW"/>
</dbReference>
<dbReference type="GO" id="GO:0006606">
    <property type="term" value="P:protein import into nucleus"/>
    <property type="evidence" value="ECO:0000318"/>
    <property type="project" value="GO_Central"/>
</dbReference>
<dbReference type="GO" id="GO:1901990">
    <property type="term" value="P:regulation of mitotic cell cycle phase transition"/>
    <property type="evidence" value="ECO:0000315"/>
    <property type="project" value="UniProtKB"/>
</dbReference>
<dbReference type="CDD" id="cd13170">
    <property type="entry name" value="RanBD_NUP50"/>
    <property type="match status" value="1"/>
</dbReference>
<dbReference type="FunFam" id="2.30.29.30:FF:000713">
    <property type="entry name" value="Nuclear Pore complex Protein"/>
    <property type="match status" value="1"/>
</dbReference>
<dbReference type="Gene3D" id="2.30.29.30">
    <property type="entry name" value="Pleckstrin-homology domain (PH domain)/Phosphotyrosine-binding domain (PTB)"/>
    <property type="match status" value="1"/>
</dbReference>
<dbReference type="InterPro" id="IPR011993">
    <property type="entry name" value="PH-like_dom_sf"/>
</dbReference>
<dbReference type="SUPFAM" id="SSF50729">
    <property type="entry name" value="PH domain-like"/>
    <property type="match status" value="1"/>
</dbReference>